<reference key="1">
    <citation type="journal article" date="2006" name="Nat. Biotechnol.">
        <title>Complete genome of the mutualistic, N2-fixing grass endophyte Azoarcus sp. strain BH72.</title>
        <authorList>
            <person name="Krause A."/>
            <person name="Ramakumar A."/>
            <person name="Bartels D."/>
            <person name="Battistoni F."/>
            <person name="Bekel T."/>
            <person name="Boch J."/>
            <person name="Boehm M."/>
            <person name="Friedrich F."/>
            <person name="Hurek T."/>
            <person name="Krause L."/>
            <person name="Linke B."/>
            <person name="McHardy A.C."/>
            <person name="Sarkar A."/>
            <person name="Schneiker S."/>
            <person name="Syed A.A."/>
            <person name="Thauer R."/>
            <person name="Vorhoelter F.-J."/>
            <person name="Weidner S."/>
            <person name="Puehler A."/>
            <person name="Reinhold-Hurek B."/>
            <person name="Kaiser O."/>
            <person name="Goesmann A."/>
        </authorList>
    </citation>
    <scope>NUCLEOTIDE SEQUENCE [LARGE SCALE GENOMIC DNA]</scope>
    <source>
        <strain>BH72</strain>
    </source>
</reference>
<sequence>MLVHPQFDPVAIAVGPVAVRWYGLMYLLAFVLFVVLGRAHARRRPELGWNAQAIDDLLLYGVLGVIIGGRLGEVLFYQPGYYLSHPAEILAVWKGGMSFHGGFLGVLVAMWLYGQRSGRGFWQITDFIAPLVPTGLAAGRIGNFINGELWGRPASPDLPWAMIFPWVDALPRHPSQLYQAAGEGLLLFAIVWVFAAKPRPLRAVSAVFLIGYGSLRFVAEFFRTPDPGIFSDLVPGLSTAQWLCVPMVVVGLALLKHAAHARARG</sequence>
<feature type="chain" id="PRO_1000053387" description="Phosphatidylglycerol--prolipoprotein diacylglyceryl transferase">
    <location>
        <begin position="1"/>
        <end position="265"/>
    </location>
</feature>
<feature type="transmembrane region" description="Helical" evidence="1">
    <location>
        <begin position="17"/>
        <end position="37"/>
    </location>
</feature>
<feature type="transmembrane region" description="Helical" evidence="1">
    <location>
        <begin position="57"/>
        <end position="77"/>
    </location>
</feature>
<feature type="transmembrane region" description="Helical" evidence="1">
    <location>
        <begin position="89"/>
        <end position="109"/>
    </location>
</feature>
<feature type="transmembrane region" description="Helical" evidence="1">
    <location>
        <begin position="127"/>
        <end position="147"/>
    </location>
</feature>
<feature type="transmembrane region" description="Helical" evidence="1">
    <location>
        <begin position="176"/>
        <end position="196"/>
    </location>
</feature>
<feature type="transmembrane region" description="Helical" evidence="1">
    <location>
        <begin position="201"/>
        <end position="218"/>
    </location>
</feature>
<feature type="transmembrane region" description="Helical" evidence="1">
    <location>
        <begin position="233"/>
        <end position="253"/>
    </location>
</feature>
<feature type="binding site" evidence="1">
    <location>
        <position position="140"/>
    </location>
    <ligand>
        <name>a 1,2-diacyl-sn-glycero-3-phospho-(1'-sn-glycerol)</name>
        <dbReference type="ChEBI" id="CHEBI:64716"/>
    </ligand>
</feature>
<comment type="function">
    <text evidence="1">Catalyzes the transfer of the diacylglyceryl group from phosphatidylglycerol to the sulfhydryl group of the N-terminal cysteine of a prolipoprotein, the first step in the formation of mature lipoproteins.</text>
</comment>
<comment type="catalytic activity">
    <reaction evidence="1">
        <text>L-cysteinyl-[prolipoprotein] + a 1,2-diacyl-sn-glycero-3-phospho-(1'-sn-glycerol) = an S-1,2-diacyl-sn-glyceryl-L-cysteinyl-[prolipoprotein] + sn-glycerol 1-phosphate + H(+)</text>
        <dbReference type="Rhea" id="RHEA:56712"/>
        <dbReference type="Rhea" id="RHEA-COMP:14679"/>
        <dbReference type="Rhea" id="RHEA-COMP:14680"/>
        <dbReference type="ChEBI" id="CHEBI:15378"/>
        <dbReference type="ChEBI" id="CHEBI:29950"/>
        <dbReference type="ChEBI" id="CHEBI:57685"/>
        <dbReference type="ChEBI" id="CHEBI:64716"/>
        <dbReference type="ChEBI" id="CHEBI:140658"/>
        <dbReference type="EC" id="2.5.1.145"/>
    </reaction>
</comment>
<comment type="pathway">
    <text evidence="1">Protein modification; lipoprotein biosynthesis (diacylglyceryl transfer).</text>
</comment>
<comment type="subcellular location">
    <subcellularLocation>
        <location evidence="1">Cell inner membrane</location>
        <topology evidence="1">Multi-pass membrane protein</topology>
    </subcellularLocation>
</comment>
<comment type="similarity">
    <text evidence="1">Belongs to the Lgt family.</text>
</comment>
<keyword id="KW-0997">Cell inner membrane</keyword>
<keyword id="KW-1003">Cell membrane</keyword>
<keyword id="KW-0472">Membrane</keyword>
<keyword id="KW-1185">Reference proteome</keyword>
<keyword id="KW-0808">Transferase</keyword>
<keyword id="KW-0812">Transmembrane</keyword>
<keyword id="KW-1133">Transmembrane helix</keyword>
<accession>A1K338</accession>
<organism>
    <name type="scientific">Azoarcus sp. (strain BH72)</name>
    <dbReference type="NCBI Taxonomy" id="418699"/>
    <lineage>
        <taxon>Bacteria</taxon>
        <taxon>Pseudomonadati</taxon>
        <taxon>Pseudomonadota</taxon>
        <taxon>Betaproteobacteria</taxon>
        <taxon>Rhodocyclales</taxon>
        <taxon>Zoogloeaceae</taxon>
        <taxon>Azoarcus</taxon>
    </lineage>
</organism>
<name>LGT_AZOSB</name>
<dbReference type="EC" id="2.5.1.145" evidence="1"/>
<dbReference type="EMBL" id="AM406670">
    <property type="protein sequence ID" value="CAL93243.1"/>
    <property type="molecule type" value="Genomic_DNA"/>
</dbReference>
<dbReference type="RefSeq" id="WP_011764361.1">
    <property type="nucleotide sequence ID" value="NC_008702.1"/>
</dbReference>
<dbReference type="SMR" id="A1K338"/>
<dbReference type="STRING" id="62928.azo0626"/>
<dbReference type="KEGG" id="aoa:dqs_0695"/>
<dbReference type="KEGG" id="azo:azo0626"/>
<dbReference type="eggNOG" id="COG0682">
    <property type="taxonomic scope" value="Bacteria"/>
</dbReference>
<dbReference type="HOGENOM" id="CLU_013386_1_0_4"/>
<dbReference type="OrthoDB" id="871140at2"/>
<dbReference type="UniPathway" id="UPA00664"/>
<dbReference type="Proteomes" id="UP000002588">
    <property type="component" value="Chromosome"/>
</dbReference>
<dbReference type="GO" id="GO:0005886">
    <property type="term" value="C:plasma membrane"/>
    <property type="evidence" value="ECO:0007669"/>
    <property type="project" value="UniProtKB-SubCell"/>
</dbReference>
<dbReference type="GO" id="GO:0008961">
    <property type="term" value="F:phosphatidylglycerol-prolipoprotein diacylglyceryl transferase activity"/>
    <property type="evidence" value="ECO:0007669"/>
    <property type="project" value="UniProtKB-UniRule"/>
</dbReference>
<dbReference type="GO" id="GO:0042158">
    <property type="term" value="P:lipoprotein biosynthetic process"/>
    <property type="evidence" value="ECO:0007669"/>
    <property type="project" value="UniProtKB-UniRule"/>
</dbReference>
<dbReference type="HAMAP" id="MF_01147">
    <property type="entry name" value="Lgt"/>
    <property type="match status" value="1"/>
</dbReference>
<dbReference type="InterPro" id="IPR001640">
    <property type="entry name" value="Lgt"/>
</dbReference>
<dbReference type="NCBIfam" id="TIGR00544">
    <property type="entry name" value="lgt"/>
    <property type="match status" value="1"/>
</dbReference>
<dbReference type="PANTHER" id="PTHR30589:SF0">
    <property type="entry name" value="PHOSPHATIDYLGLYCEROL--PROLIPOPROTEIN DIACYLGLYCERYL TRANSFERASE"/>
    <property type="match status" value="1"/>
</dbReference>
<dbReference type="PANTHER" id="PTHR30589">
    <property type="entry name" value="PROLIPOPROTEIN DIACYLGLYCERYL TRANSFERASE"/>
    <property type="match status" value="1"/>
</dbReference>
<dbReference type="Pfam" id="PF01790">
    <property type="entry name" value="LGT"/>
    <property type="match status" value="1"/>
</dbReference>
<dbReference type="PROSITE" id="PS01311">
    <property type="entry name" value="LGT"/>
    <property type="match status" value="1"/>
</dbReference>
<proteinExistence type="inferred from homology"/>
<evidence type="ECO:0000255" key="1">
    <source>
        <dbReference type="HAMAP-Rule" id="MF_01147"/>
    </source>
</evidence>
<protein>
    <recommendedName>
        <fullName evidence="1">Phosphatidylglycerol--prolipoprotein diacylglyceryl transferase</fullName>
        <ecNumber evidence="1">2.5.1.145</ecNumber>
    </recommendedName>
</protein>
<gene>
    <name evidence="1" type="primary">lgt</name>
    <name type="ordered locus">azo0626</name>
</gene>